<accession>Q9JY09</accession>
<evidence type="ECO:0000255" key="1">
    <source>
        <dbReference type="HAMAP-Rule" id="MF_00086"/>
    </source>
</evidence>
<protein>
    <recommendedName>
        <fullName evidence="1">S-adenosylmethionine synthase</fullName>
        <shortName evidence="1">AdoMet synthase</shortName>
        <ecNumber evidence="1">2.5.1.6</ecNumber>
    </recommendedName>
    <alternativeName>
        <fullName evidence="1">MAT</fullName>
    </alternativeName>
    <alternativeName>
        <fullName evidence="1">Methionine adenosyltransferase</fullName>
    </alternativeName>
</protein>
<reference key="1">
    <citation type="journal article" date="2000" name="Science">
        <title>Complete genome sequence of Neisseria meningitidis serogroup B strain MC58.</title>
        <authorList>
            <person name="Tettelin H."/>
            <person name="Saunders N.J."/>
            <person name="Heidelberg J.F."/>
            <person name="Jeffries A.C."/>
            <person name="Nelson K.E."/>
            <person name="Eisen J.A."/>
            <person name="Ketchum K.A."/>
            <person name="Hood D.W."/>
            <person name="Peden J.F."/>
            <person name="Dodson R.J."/>
            <person name="Nelson W.C."/>
            <person name="Gwinn M.L."/>
            <person name="DeBoy R.T."/>
            <person name="Peterson J.D."/>
            <person name="Hickey E.K."/>
            <person name="Haft D.H."/>
            <person name="Salzberg S.L."/>
            <person name="White O."/>
            <person name="Fleischmann R.D."/>
            <person name="Dougherty B.A."/>
            <person name="Mason T.M."/>
            <person name="Ciecko A."/>
            <person name="Parksey D.S."/>
            <person name="Blair E."/>
            <person name="Cittone H."/>
            <person name="Clark E.B."/>
            <person name="Cotton M.D."/>
            <person name="Utterback T.R."/>
            <person name="Khouri H.M."/>
            <person name="Qin H."/>
            <person name="Vamathevan J.J."/>
            <person name="Gill J."/>
            <person name="Scarlato V."/>
            <person name="Masignani V."/>
            <person name="Pizza M."/>
            <person name="Grandi G."/>
            <person name="Sun L."/>
            <person name="Smith H.O."/>
            <person name="Fraser C.M."/>
            <person name="Moxon E.R."/>
            <person name="Rappuoli R."/>
            <person name="Venter J.C."/>
        </authorList>
    </citation>
    <scope>NUCLEOTIDE SEQUENCE [LARGE SCALE GENOMIC DNA]</scope>
    <source>
        <strain>ATCC BAA-335 / MC58</strain>
    </source>
</reference>
<gene>
    <name evidence="1" type="primary">metK</name>
    <name type="ordered locus">NMB1799</name>
</gene>
<dbReference type="EC" id="2.5.1.6" evidence="1"/>
<dbReference type="EMBL" id="AE002098">
    <property type="protein sequence ID" value="AAF42136.1"/>
    <property type="molecule type" value="Genomic_DNA"/>
</dbReference>
<dbReference type="PIR" id="D81042">
    <property type="entry name" value="D81042"/>
</dbReference>
<dbReference type="RefSeq" id="NP_274796.1">
    <property type="nucleotide sequence ID" value="NC_003112.2"/>
</dbReference>
<dbReference type="RefSeq" id="WP_002225644.1">
    <property type="nucleotide sequence ID" value="NC_003112.2"/>
</dbReference>
<dbReference type="SMR" id="Q9JY09"/>
<dbReference type="FunCoup" id="Q9JY09">
    <property type="interactions" value="525"/>
</dbReference>
<dbReference type="STRING" id="122586.NMB1799"/>
<dbReference type="PaxDb" id="122586-NMB1799"/>
<dbReference type="KEGG" id="nme:NMB1799"/>
<dbReference type="PATRIC" id="fig|122586.8.peg.2289"/>
<dbReference type="HOGENOM" id="CLU_041802_1_1_4"/>
<dbReference type="InParanoid" id="Q9JY09"/>
<dbReference type="OrthoDB" id="9801686at2"/>
<dbReference type="UniPathway" id="UPA00315">
    <property type="reaction ID" value="UER00080"/>
</dbReference>
<dbReference type="Proteomes" id="UP000000425">
    <property type="component" value="Chromosome"/>
</dbReference>
<dbReference type="GO" id="GO:0005829">
    <property type="term" value="C:cytosol"/>
    <property type="evidence" value="ECO:0000318"/>
    <property type="project" value="GO_Central"/>
</dbReference>
<dbReference type="GO" id="GO:0005524">
    <property type="term" value="F:ATP binding"/>
    <property type="evidence" value="ECO:0007669"/>
    <property type="project" value="UniProtKB-UniRule"/>
</dbReference>
<dbReference type="GO" id="GO:0000287">
    <property type="term" value="F:magnesium ion binding"/>
    <property type="evidence" value="ECO:0007669"/>
    <property type="project" value="UniProtKB-UniRule"/>
</dbReference>
<dbReference type="GO" id="GO:0004478">
    <property type="term" value="F:methionine adenosyltransferase activity"/>
    <property type="evidence" value="ECO:0000318"/>
    <property type="project" value="GO_Central"/>
</dbReference>
<dbReference type="GO" id="GO:0006730">
    <property type="term" value="P:one-carbon metabolic process"/>
    <property type="evidence" value="ECO:0007669"/>
    <property type="project" value="UniProtKB-KW"/>
</dbReference>
<dbReference type="GO" id="GO:0006556">
    <property type="term" value="P:S-adenosylmethionine biosynthetic process"/>
    <property type="evidence" value="ECO:0000318"/>
    <property type="project" value="GO_Central"/>
</dbReference>
<dbReference type="CDD" id="cd18079">
    <property type="entry name" value="S-AdoMet_synt"/>
    <property type="match status" value="1"/>
</dbReference>
<dbReference type="FunFam" id="3.30.300.10:FF:000003">
    <property type="entry name" value="S-adenosylmethionine synthase"/>
    <property type="match status" value="1"/>
</dbReference>
<dbReference type="FunFam" id="3.30.300.10:FF:000004">
    <property type="entry name" value="S-adenosylmethionine synthase"/>
    <property type="match status" value="1"/>
</dbReference>
<dbReference type="Gene3D" id="3.30.300.10">
    <property type="match status" value="3"/>
</dbReference>
<dbReference type="HAMAP" id="MF_00086">
    <property type="entry name" value="S_AdoMet_synth1"/>
    <property type="match status" value="1"/>
</dbReference>
<dbReference type="InterPro" id="IPR022631">
    <property type="entry name" value="ADOMET_SYNTHASE_CS"/>
</dbReference>
<dbReference type="InterPro" id="IPR022630">
    <property type="entry name" value="S-AdoMet_synt_C"/>
</dbReference>
<dbReference type="InterPro" id="IPR022629">
    <property type="entry name" value="S-AdoMet_synt_central"/>
</dbReference>
<dbReference type="InterPro" id="IPR022628">
    <property type="entry name" value="S-AdoMet_synt_N"/>
</dbReference>
<dbReference type="InterPro" id="IPR002133">
    <property type="entry name" value="S-AdoMet_synthetase"/>
</dbReference>
<dbReference type="InterPro" id="IPR022636">
    <property type="entry name" value="S-AdoMet_synthetase_sfam"/>
</dbReference>
<dbReference type="NCBIfam" id="TIGR01034">
    <property type="entry name" value="metK"/>
    <property type="match status" value="1"/>
</dbReference>
<dbReference type="PANTHER" id="PTHR11964">
    <property type="entry name" value="S-ADENOSYLMETHIONINE SYNTHETASE"/>
    <property type="match status" value="1"/>
</dbReference>
<dbReference type="Pfam" id="PF02773">
    <property type="entry name" value="S-AdoMet_synt_C"/>
    <property type="match status" value="1"/>
</dbReference>
<dbReference type="Pfam" id="PF02772">
    <property type="entry name" value="S-AdoMet_synt_M"/>
    <property type="match status" value="1"/>
</dbReference>
<dbReference type="Pfam" id="PF00438">
    <property type="entry name" value="S-AdoMet_synt_N"/>
    <property type="match status" value="1"/>
</dbReference>
<dbReference type="PIRSF" id="PIRSF000497">
    <property type="entry name" value="MAT"/>
    <property type="match status" value="1"/>
</dbReference>
<dbReference type="SUPFAM" id="SSF55973">
    <property type="entry name" value="S-adenosylmethionine synthetase"/>
    <property type="match status" value="3"/>
</dbReference>
<dbReference type="PROSITE" id="PS00376">
    <property type="entry name" value="ADOMET_SYNTHASE_1"/>
    <property type="match status" value="1"/>
</dbReference>
<dbReference type="PROSITE" id="PS00377">
    <property type="entry name" value="ADOMET_SYNTHASE_2"/>
    <property type="match status" value="1"/>
</dbReference>
<proteinExistence type="inferred from homology"/>
<sequence length="389" mass="42099">MSEYLFTSESVSEGHPDKVADQVSDAILDAILAQDPKARVAAETLVNTGLCVLAGEITTTAQVDYIKVARETIKRIGYNSSELGFDANGCAVGVYYDQQSPDIAQGVNEGEGIDLNQGAGDQGLMFGYACDETPTLMPFAIYYSHRLMQRQSELRKDGRLPWLRPDAKAQLTVVYDSETGKVKRIDTVVLSTQHDPSIAYEELKNAVIEHIIKPVLPSELLTDETKYLINPTGRFVIGGPQGDCGLTGRKIIVDTYGGAAPHGGGAFSGKDPSKVDRSAAYACRYVAKNIVAAGLATQCQIQVSYAIGVAEPTSISIDTFGTGKISEEKLIALVREHFDLRPKGIVQMLDLLRPIYSKSAAYGHFGREEPEFTWERTDKAAALRAAAGL</sequence>
<feature type="chain" id="PRO_0000174560" description="S-adenosylmethionine synthase">
    <location>
        <begin position="1"/>
        <end position="389"/>
    </location>
</feature>
<feature type="region of interest" description="Flexible loop" evidence="1">
    <location>
        <begin position="99"/>
        <end position="109"/>
    </location>
</feature>
<feature type="binding site" description="in other chain" evidence="1">
    <location>
        <position position="15"/>
    </location>
    <ligand>
        <name>ATP</name>
        <dbReference type="ChEBI" id="CHEBI:30616"/>
        <note>ligand shared between two neighboring subunits</note>
    </ligand>
</feature>
<feature type="binding site" evidence="1">
    <location>
        <position position="17"/>
    </location>
    <ligand>
        <name>Mg(2+)</name>
        <dbReference type="ChEBI" id="CHEBI:18420"/>
    </ligand>
</feature>
<feature type="binding site" evidence="1">
    <location>
        <position position="43"/>
    </location>
    <ligand>
        <name>K(+)</name>
        <dbReference type="ChEBI" id="CHEBI:29103"/>
    </ligand>
</feature>
<feature type="binding site" description="in other chain" evidence="1">
    <location>
        <position position="56"/>
    </location>
    <ligand>
        <name>L-methionine</name>
        <dbReference type="ChEBI" id="CHEBI:57844"/>
        <note>ligand shared between two neighboring subunits</note>
    </ligand>
</feature>
<feature type="binding site" description="in other chain" evidence="1">
    <location>
        <position position="99"/>
    </location>
    <ligand>
        <name>L-methionine</name>
        <dbReference type="ChEBI" id="CHEBI:57844"/>
        <note>ligand shared between two neighboring subunits</note>
    </ligand>
</feature>
<feature type="binding site" description="in other chain" evidence="1">
    <location>
        <begin position="166"/>
        <end position="168"/>
    </location>
    <ligand>
        <name>ATP</name>
        <dbReference type="ChEBI" id="CHEBI:30616"/>
        <note>ligand shared between two neighboring subunits</note>
    </ligand>
</feature>
<feature type="binding site" description="in other chain" evidence="1">
    <location>
        <begin position="234"/>
        <end position="235"/>
    </location>
    <ligand>
        <name>ATP</name>
        <dbReference type="ChEBI" id="CHEBI:30616"/>
        <note>ligand shared between two neighboring subunits</note>
    </ligand>
</feature>
<feature type="binding site" evidence="1">
    <location>
        <position position="243"/>
    </location>
    <ligand>
        <name>ATP</name>
        <dbReference type="ChEBI" id="CHEBI:30616"/>
        <note>ligand shared between two neighboring subunits</note>
    </ligand>
</feature>
<feature type="binding site" evidence="1">
    <location>
        <position position="243"/>
    </location>
    <ligand>
        <name>L-methionine</name>
        <dbReference type="ChEBI" id="CHEBI:57844"/>
        <note>ligand shared between two neighboring subunits</note>
    </ligand>
</feature>
<feature type="binding site" description="in other chain" evidence="1">
    <location>
        <begin position="249"/>
        <end position="250"/>
    </location>
    <ligand>
        <name>ATP</name>
        <dbReference type="ChEBI" id="CHEBI:30616"/>
        <note>ligand shared between two neighboring subunits</note>
    </ligand>
</feature>
<feature type="binding site" evidence="1">
    <location>
        <position position="266"/>
    </location>
    <ligand>
        <name>ATP</name>
        <dbReference type="ChEBI" id="CHEBI:30616"/>
        <note>ligand shared between two neighboring subunits</note>
    </ligand>
</feature>
<feature type="binding site" evidence="1">
    <location>
        <position position="270"/>
    </location>
    <ligand>
        <name>ATP</name>
        <dbReference type="ChEBI" id="CHEBI:30616"/>
        <note>ligand shared between two neighboring subunits</note>
    </ligand>
</feature>
<feature type="binding site" description="in other chain" evidence="1">
    <location>
        <position position="274"/>
    </location>
    <ligand>
        <name>L-methionine</name>
        <dbReference type="ChEBI" id="CHEBI:57844"/>
        <note>ligand shared between two neighboring subunits</note>
    </ligand>
</feature>
<comment type="function">
    <text evidence="1">Catalyzes the formation of S-adenosylmethionine (AdoMet) from methionine and ATP. The overall synthetic reaction is composed of two sequential steps, AdoMet formation and the subsequent tripolyphosphate hydrolysis which occurs prior to release of AdoMet from the enzyme.</text>
</comment>
<comment type="catalytic activity">
    <reaction evidence="1">
        <text>L-methionine + ATP + H2O = S-adenosyl-L-methionine + phosphate + diphosphate</text>
        <dbReference type="Rhea" id="RHEA:21080"/>
        <dbReference type="ChEBI" id="CHEBI:15377"/>
        <dbReference type="ChEBI" id="CHEBI:30616"/>
        <dbReference type="ChEBI" id="CHEBI:33019"/>
        <dbReference type="ChEBI" id="CHEBI:43474"/>
        <dbReference type="ChEBI" id="CHEBI:57844"/>
        <dbReference type="ChEBI" id="CHEBI:59789"/>
        <dbReference type="EC" id="2.5.1.6"/>
    </reaction>
</comment>
<comment type="cofactor">
    <cofactor evidence="1">
        <name>Mg(2+)</name>
        <dbReference type="ChEBI" id="CHEBI:18420"/>
    </cofactor>
    <text evidence="1">Binds 2 divalent ions per subunit.</text>
</comment>
<comment type="cofactor">
    <cofactor evidence="1">
        <name>K(+)</name>
        <dbReference type="ChEBI" id="CHEBI:29103"/>
    </cofactor>
    <text evidence="1">Binds 1 potassium ion per subunit.</text>
</comment>
<comment type="pathway">
    <text evidence="1">Amino-acid biosynthesis; S-adenosyl-L-methionine biosynthesis; S-adenosyl-L-methionine from L-methionine: step 1/1.</text>
</comment>
<comment type="subunit">
    <text evidence="1">Homotetramer; dimer of dimers.</text>
</comment>
<comment type="subcellular location">
    <subcellularLocation>
        <location evidence="1">Cytoplasm</location>
    </subcellularLocation>
</comment>
<comment type="similarity">
    <text evidence="1">Belongs to the AdoMet synthase family.</text>
</comment>
<organism>
    <name type="scientific">Neisseria meningitidis serogroup B (strain ATCC BAA-335 / MC58)</name>
    <dbReference type="NCBI Taxonomy" id="122586"/>
    <lineage>
        <taxon>Bacteria</taxon>
        <taxon>Pseudomonadati</taxon>
        <taxon>Pseudomonadota</taxon>
        <taxon>Betaproteobacteria</taxon>
        <taxon>Neisseriales</taxon>
        <taxon>Neisseriaceae</taxon>
        <taxon>Neisseria</taxon>
    </lineage>
</organism>
<name>METK_NEIMB</name>
<keyword id="KW-0067">ATP-binding</keyword>
<keyword id="KW-0963">Cytoplasm</keyword>
<keyword id="KW-0460">Magnesium</keyword>
<keyword id="KW-0479">Metal-binding</keyword>
<keyword id="KW-0547">Nucleotide-binding</keyword>
<keyword id="KW-0554">One-carbon metabolism</keyword>
<keyword id="KW-0630">Potassium</keyword>
<keyword id="KW-1185">Reference proteome</keyword>
<keyword id="KW-0808">Transferase</keyword>